<reference key="1">
    <citation type="journal article" date="2016" name="Nature">
        <title>Genome evolution in the allotetraploid frog Xenopus laevis.</title>
        <authorList>
            <person name="Session A.M."/>
            <person name="Uno Y."/>
            <person name="Kwon T."/>
            <person name="Chapman J.A."/>
            <person name="Toyoda A."/>
            <person name="Takahashi S."/>
            <person name="Fukui A."/>
            <person name="Hikosaka A."/>
            <person name="Suzuki A."/>
            <person name="Kondo M."/>
            <person name="van Heeringen S.J."/>
            <person name="Quigley I."/>
            <person name="Heinz S."/>
            <person name="Ogino H."/>
            <person name="Ochi H."/>
            <person name="Hellsten U."/>
            <person name="Lyons J.B."/>
            <person name="Simakov O."/>
            <person name="Putnam N."/>
            <person name="Stites J."/>
            <person name="Kuroki Y."/>
            <person name="Tanaka T."/>
            <person name="Michiue T."/>
            <person name="Watanabe M."/>
            <person name="Bogdanovic O."/>
            <person name="Lister R."/>
            <person name="Georgiou G."/>
            <person name="Paranjpe S.S."/>
            <person name="van Kruijsbergen I."/>
            <person name="Shu S."/>
            <person name="Carlson J."/>
            <person name="Kinoshita T."/>
            <person name="Ohta Y."/>
            <person name="Mawaribuchi S."/>
            <person name="Jenkins J."/>
            <person name="Grimwood J."/>
            <person name="Schmutz J."/>
            <person name="Mitros T."/>
            <person name="Mozaffari S.V."/>
            <person name="Suzuki Y."/>
            <person name="Haramoto Y."/>
            <person name="Yamamoto T.S."/>
            <person name="Takagi C."/>
            <person name="Heald R."/>
            <person name="Miller K."/>
            <person name="Haudenschild C."/>
            <person name="Kitzman J."/>
            <person name="Nakayama T."/>
            <person name="Izutsu Y."/>
            <person name="Robert J."/>
            <person name="Fortriede J."/>
            <person name="Burns K."/>
            <person name="Lotay V."/>
            <person name="Karimi K."/>
            <person name="Yasuoka Y."/>
            <person name="Dichmann D.S."/>
            <person name="Flajnik M.F."/>
            <person name="Houston D.W."/>
            <person name="Shendure J."/>
            <person name="DuPasquier L."/>
            <person name="Vize P.D."/>
            <person name="Zorn A.M."/>
            <person name="Ito M."/>
            <person name="Marcotte E.M."/>
            <person name="Wallingford J.B."/>
            <person name="Ito Y."/>
            <person name="Asashima M."/>
            <person name="Ueno N."/>
            <person name="Matsuda Y."/>
            <person name="Veenstra G.J."/>
            <person name="Fujiyama A."/>
            <person name="Harland R.M."/>
            <person name="Taira M."/>
            <person name="Rokhsar D.S."/>
        </authorList>
    </citation>
    <scope>NUCLEOTIDE SEQUENCE [LARGE SCALE GENOMIC DNA]</scope>
    <source>
        <strain>J</strain>
    </source>
</reference>
<organism>
    <name type="scientific">Xenopus laevis</name>
    <name type="common">African clawed frog</name>
    <dbReference type="NCBI Taxonomy" id="8355"/>
    <lineage>
        <taxon>Eukaryota</taxon>
        <taxon>Metazoa</taxon>
        <taxon>Chordata</taxon>
        <taxon>Craniata</taxon>
        <taxon>Vertebrata</taxon>
        <taxon>Euteleostomi</taxon>
        <taxon>Amphibia</taxon>
        <taxon>Batrachia</taxon>
        <taxon>Anura</taxon>
        <taxon>Pipoidea</taxon>
        <taxon>Pipidae</taxon>
        <taxon>Xenopodinae</taxon>
        <taxon>Xenopus</taxon>
        <taxon>Xenopus</taxon>
    </lineage>
</organism>
<keyword id="KW-0067">ATP-binding</keyword>
<keyword id="KW-0963">Cytoplasm</keyword>
<keyword id="KW-0255">Endonuclease</keyword>
<keyword id="KW-0347">Helicase</keyword>
<keyword id="KW-0378">Hydrolase</keyword>
<keyword id="KW-0460">Magnesium</keyword>
<keyword id="KW-0464">Manganese</keyword>
<keyword id="KW-0479">Metal-binding</keyword>
<keyword id="KW-0540">Nuclease</keyword>
<keyword id="KW-0547">Nucleotide-binding</keyword>
<keyword id="KW-0597">Phosphoprotein</keyword>
<keyword id="KW-1185">Reference proteome</keyword>
<keyword id="KW-0677">Repeat</keyword>
<keyword id="KW-0694">RNA-binding</keyword>
<keyword id="KW-0943">RNA-mediated gene silencing</keyword>
<evidence type="ECO:0000250" key="1"/>
<evidence type="ECO:0000250" key="2">
    <source>
        <dbReference type="UniProtKB" id="A0A974H8H3"/>
    </source>
</evidence>
<evidence type="ECO:0000250" key="3">
    <source>
        <dbReference type="UniProtKB" id="B3DLA6"/>
    </source>
</evidence>
<evidence type="ECO:0000250" key="4">
    <source>
        <dbReference type="UniProtKB" id="Q8R418"/>
    </source>
</evidence>
<evidence type="ECO:0000250" key="5">
    <source>
        <dbReference type="UniProtKB" id="Q9UPY3"/>
    </source>
</evidence>
<evidence type="ECO:0000255" key="6">
    <source>
        <dbReference type="PROSITE-ProRule" id="PRU00142"/>
    </source>
</evidence>
<evidence type="ECO:0000255" key="7">
    <source>
        <dbReference type="PROSITE-ProRule" id="PRU00177"/>
    </source>
</evidence>
<evidence type="ECO:0000255" key="8">
    <source>
        <dbReference type="PROSITE-ProRule" id="PRU00266"/>
    </source>
</evidence>
<evidence type="ECO:0000255" key="9">
    <source>
        <dbReference type="PROSITE-ProRule" id="PRU00541"/>
    </source>
</evidence>
<evidence type="ECO:0000255" key="10">
    <source>
        <dbReference type="PROSITE-ProRule" id="PRU00542"/>
    </source>
</evidence>
<evidence type="ECO:0000255" key="11">
    <source>
        <dbReference type="PROSITE-ProRule" id="PRU00657"/>
    </source>
</evidence>
<dbReference type="EC" id="3.1.26.3"/>
<dbReference type="EMBL" id="CM004481">
    <property type="status" value="NOT_ANNOTATED_CDS"/>
    <property type="molecule type" value="Genomic_DNA"/>
</dbReference>
<dbReference type="RefSeq" id="XP_041429979.1">
    <property type="nucleotide sequence ID" value="XM_041574045.1"/>
</dbReference>
<dbReference type="GeneID" id="100316917"/>
<dbReference type="OrthoDB" id="2392202at2759"/>
<dbReference type="Proteomes" id="UP000186698">
    <property type="component" value="Chromosome 8S"/>
</dbReference>
<dbReference type="Proteomes" id="UP000694892">
    <property type="component" value="Chromosome 8S"/>
</dbReference>
<dbReference type="GO" id="GO:0005737">
    <property type="term" value="C:cytoplasm"/>
    <property type="evidence" value="ECO:0000318"/>
    <property type="project" value="GO_Central"/>
</dbReference>
<dbReference type="GO" id="GO:0005634">
    <property type="term" value="C:nucleus"/>
    <property type="evidence" value="ECO:0000318"/>
    <property type="project" value="GO_Central"/>
</dbReference>
<dbReference type="GO" id="GO:0070578">
    <property type="term" value="C:RISC-loading complex"/>
    <property type="evidence" value="ECO:0000318"/>
    <property type="project" value="GO_Central"/>
</dbReference>
<dbReference type="GO" id="GO:0005524">
    <property type="term" value="F:ATP binding"/>
    <property type="evidence" value="ECO:0007669"/>
    <property type="project" value="UniProtKB-KW"/>
</dbReference>
<dbReference type="GO" id="GO:0004530">
    <property type="term" value="F:deoxyribonuclease I activity"/>
    <property type="evidence" value="ECO:0000318"/>
    <property type="project" value="GO_Central"/>
</dbReference>
<dbReference type="GO" id="GO:0004386">
    <property type="term" value="F:helicase activity"/>
    <property type="evidence" value="ECO:0007669"/>
    <property type="project" value="UniProtKB-KW"/>
</dbReference>
<dbReference type="GO" id="GO:0004525">
    <property type="term" value="F:ribonuclease III activity"/>
    <property type="evidence" value="ECO:0000318"/>
    <property type="project" value="GO_Central"/>
</dbReference>
<dbReference type="GO" id="GO:0003723">
    <property type="term" value="F:RNA binding"/>
    <property type="evidence" value="ECO:0000318"/>
    <property type="project" value="GO_Central"/>
</dbReference>
<dbReference type="GO" id="GO:0006309">
    <property type="term" value="P:apoptotic DNA fragmentation"/>
    <property type="evidence" value="ECO:0000318"/>
    <property type="project" value="GO_Central"/>
</dbReference>
<dbReference type="GO" id="GO:0031054">
    <property type="term" value="P:pre-miRNA processing"/>
    <property type="evidence" value="ECO:0000318"/>
    <property type="project" value="GO_Central"/>
</dbReference>
<dbReference type="GO" id="GO:0030422">
    <property type="term" value="P:siRNA processing"/>
    <property type="evidence" value="ECO:0000318"/>
    <property type="project" value="GO_Central"/>
</dbReference>
<dbReference type="CDD" id="cd18034">
    <property type="entry name" value="DEXHc_dicer"/>
    <property type="match status" value="1"/>
</dbReference>
<dbReference type="CDD" id="cd15903">
    <property type="entry name" value="Dicer_PBD"/>
    <property type="match status" value="1"/>
</dbReference>
<dbReference type="CDD" id="cd10843">
    <property type="entry name" value="DSRM_DICER"/>
    <property type="match status" value="1"/>
</dbReference>
<dbReference type="CDD" id="cd02843">
    <property type="entry name" value="PAZ_dicer_like"/>
    <property type="match status" value="1"/>
</dbReference>
<dbReference type="CDD" id="cd00593">
    <property type="entry name" value="RIBOc"/>
    <property type="match status" value="2"/>
</dbReference>
<dbReference type="CDD" id="cd18802">
    <property type="entry name" value="SF2_C_dicer"/>
    <property type="match status" value="1"/>
</dbReference>
<dbReference type="FunFam" id="1.10.1520.10:FF:000023">
    <property type="entry name" value="Endoribonuclease dcr-1"/>
    <property type="match status" value="1"/>
</dbReference>
<dbReference type="FunFam" id="3.40.50.300:FF:000628">
    <property type="entry name" value="Endoribonuclease Dicer"/>
    <property type="match status" value="1"/>
</dbReference>
<dbReference type="FunFam" id="3.30.160.20:FF:000015">
    <property type="entry name" value="endoribonuclease Dicer"/>
    <property type="match status" value="1"/>
</dbReference>
<dbReference type="FunFam" id="3.30.160.380:FF:000002">
    <property type="entry name" value="Endoribonuclease Dicer isoform 1"/>
    <property type="match status" value="1"/>
</dbReference>
<dbReference type="FunFam" id="3.40.50.300:FF:000588">
    <property type="entry name" value="Endoribonuclease Dicer isoform 1"/>
    <property type="match status" value="1"/>
</dbReference>
<dbReference type="FunFam" id="2.170.260.10:FF:000002">
    <property type="entry name" value="Putative Endoribonuclease Dicer"/>
    <property type="match status" value="1"/>
</dbReference>
<dbReference type="FunFam" id="1.10.1520.10:FF:000005">
    <property type="entry name" value="Putative endoribonuclease dicer"/>
    <property type="match status" value="1"/>
</dbReference>
<dbReference type="Gene3D" id="3.30.160.20">
    <property type="match status" value="1"/>
</dbReference>
<dbReference type="Gene3D" id="3.30.160.380">
    <property type="entry name" value="Dicer dimerisation domain"/>
    <property type="match status" value="1"/>
</dbReference>
<dbReference type="Gene3D" id="3.40.50.300">
    <property type="entry name" value="P-loop containing nucleotide triphosphate hydrolases"/>
    <property type="match status" value="2"/>
</dbReference>
<dbReference type="Gene3D" id="2.170.260.10">
    <property type="entry name" value="paz domain"/>
    <property type="match status" value="1"/>
</dbReference>
<dbReference type="Gene3D" id="1.10.1520.10">
    <property type="entry name" value="Ribonuclease III domain"/>
    <property type="match status" value="2"/>
</dbReference>
<dbReference type="InterPro" id="IPR011545">
    <property type="entry name" value="DEAD/DEAH_box_helicase_dom"/>
</dbReference>
<dbReference type="InterPro" id="IPR038248">
    <property type="entry name" value="Dicer_dimer_sf"/>
</dbReference>
<dbReference type="InterPro" id="IPR005034">
    <property type="entry name" value="Dicer_dimerisation_dom"/>
</dbReference>
<dbReference type="InterPro" id="IPR044441">
    <property type="entry name" value="DICER_DSRM"/>
</dbReference>
<dbReference type="InterPro" id="IPR048513">
    <property type="entry name" value="Dicer_PBD"/>
</dbReference>
<dbReference type="InterPro" id="IPR048512">
    <property type="entry name" value="Dicer_platform"/>
</dbReference>
<dbReference type="InterPro" id="IPR014720">
    <property type="entry name" value="dsRBD_dom"/>
</dbReference>
<dbReference type="InterPro" id="IPR014001">
    <property type="entry name" value="Helicase_ATP-bd"/>
</dbReference>
<dbReference type="InterPro" id="IPR001650">
    <property type="entry name" value="Helicase_C-like"/>
</dbReference>
<dbReference type="InterPro" id="IPR027417">
    <property type="entry name" value="P-loop_NTPase"/>
</dbReference>
<dbReference type="InterPro" id="IPR003100">
    <property type="entry name" value="PAZ_dom"/>
</dbReference>
<dbReference type="InterPro" id="IPR036085">
    <property type="entry name" value="PAZ_dom_sf"/>
</dbReference>
<dbReference type="InterPro" id="IPR000999">
    <property type="entry name" value="RNase_III_dom"/>
</dbReference>
<dbReference type="InterPro" id="IPR036389">
    <property type="entry name" value="RNase_III_sf"/>
</dbReference>
<dbReference type="PANTHER" id="PTHR14950">
    <property type="entry name" value="DICER-RELATED"/>
    <property type="match status" value="1"/>
</dbReference>
<dbReference type="PANTHER" id="PTHR14950:SF37">
    <property type="entry name" value="ENDORIBONUCLEASE DICER"/>
    <property type="match status" value="1"/>
</dbReference>
<dbReference type="Pfam" id="PF00270">
    <property type="entry name" value="DEAD"/>
    <property type="match status" value="1"/>
</dbReference>
<dbReference type="Pfam" id="PF03368">
    <property type="entry name" value="Dicer_dimer"/>
    <property type="match status" value="1"/>
</dbReference>
<dbReference type="Pfam" id="PF20932">
    <property type="entry name" value="Dicer_dsRBD"/>
    <property type="match status" value="1"/>
</dbReference>
<dbReference type="Pfam" id="PF20930">
    <property type="entry name" value="Dicer_PBD"/>
    <property type="match status" value="1"/>
</dbReference>
<dbReference type="Pfam" id="PF20931">
    <property type="entry name" value="Dicer_platform"/>
    <property type="match status" value="1"/>
</dbReference>
<dbReference type="Pfam" id="PF00271">
    <property type="entry name" value="Helicase_C"/>
    <property type="match status" value="1"/>
</dbReference>
<dbReference type="Pfam" id="PF02170">
    <property type="entry name" value="PAZ"/>
    <property type="match status" value="1"/>
</dbReference>
<dbReference type="Pfam" id="PF00636">
    <property type="entry name" value="Ribonuclease_3"/>
    <property type="match status" value="2"/>
</dbReference>
<dbReference type="SMART" id="SM00487">
    <property type="entry name" value="DEXDc"/>
    <property type="match status" value="1"/>
</dbReference>
<dbReference type="SMART" id="SM00358">
    <property type="entry name" value="DSRM"/>
    <property type="match status" value="1"/>
</dbReference>
<dbReference type="SMART" id="SM00490">
    <property type="entry name" value="HELICc"/>
    <property type="match status" value="1"/>
</dbReference>
<dbReference type="SMART" id="SM00949">
    <property type="entry name" value="PAZ"/>
    <property type="match status" value="1"/>
</dbReference>
<dbReference type="SMART" id="SM00535">
    <property type="entry name" value="RIBOc"/>
    <property type="match status" value="2"/>
</dbReference>
<dbReference type="SUPFAM" id="SSF54768">
    <property type="entry name" value="dsRNA-binding domain-like"/>
    <property type="match status" value="1"/>
</dbReference>
<dbReference type="SUPFAM" id="SSF52540">
    <property type="entry name" value="P-loop containing nucleoside triphosphate hydrolases"/>
    <property type="match status" value="1"/>
</dbReference>
<dbReference type="SUPFAM" id="SSF101690">
    <property type="entry name" value="PAZ domain"/>
    <property type="match status" value="1"/>
</dbReference>
<dbReference type="SUPFAM" id="SSF69065">
    <property type="entry name" value="RNase III domain-like"/>
    <property type="match status" value="2"/>
</dbReference>
<dbReference type="PROSITE" id="PS51327">
    <property type="entry name" value="DICER_DSRBF"/>
    <property type="match status" value="1"/>
</dbReference>
<dbReference type="PROSITE" id="PS50137">
    <property type="entry name" value="DS_RBD"/>
    <property type="match status" value="1"/>
</dbReference>
<dbReference type="PROSITE" id="PS51192">
    <property type="entry name" value="HELICASE_ATP_BIND_1"/>
    <property type="match status" value="1"/>
</dbReference>
<dbReference type="PROSITE" id="PS51194">
    <property type="entry name" value="HELICASE_CTER"/>
    <property type="match status" value="1"/>
</dbReference>
<dbReference type="PROSITE" id="PS50821">
    <property type="entry name" value="PAZ"/>
    <property type="match status" value="1"/>
</dbReference>
<dbReference type="PROSITE" id="PS00517">
    <property type="entry name" value="RNASE_3_1"/>
    <property type="match status" value="1"/>
</dbReference>
<dbReference type="PROSITE" id="PS50142">
    <property type="entry name" value="RNASE_3_2"/>
    <property type="match status" value="2"/>
</dbReference>
<proteinExistence type="inferred from homology"/>
<name>DICRS_XENLA</name>
<feature type="chain" id="PRO_0000462471" description="Endoribonuclease Dicer-S">
    <location>
        <begin position="1"/>
        <end position="1881"/>
    </location>
</feature>
<feature type="domain" description="Helicase ATP-binding" evidence="9">
    <location>
        <begin position="41"/>
        <end position="217"/>
    </location>
</feature>
<feature type="domain" description="Helicase C-terminal" evidence="10">
    <location>
        <begin position="425"/>
        <end position="594"/>
    </location>
</feature>
<feature type="domain" description="Dicer dsRNA-binding fold" evidence="11">
    <location>
        <begin position="622"/>
        <end position="714"/>
    </location>
</feature>
<feature type="domain" description="PAZ" evidence="6">
    <location>
        <begin position="887"/>
        <end position="1034"/>
    </location>
</feature>
<feature type="domain" description="RNase III 1" evidence="7">
    <location>
        <begin position="1249"/>
        <end position="1380"/>
    </location>
</feature>
<feature type="domain" description="RNase III 2" evidence="7">
    <location>
        <begin position="1625"/>
        <end position="1783"/>
    </location>
</feature>
<feature type="domain" description="DRBM" evidence="8">
    <location>
        <begin position="1808"/>
        <end position="1873"/>
    </location>
</feature>
<feature type="short sequence motif" description="DECH box" evidence="3">
    <location>
        <begin position="165"/>
        <end position="168"/>
    </location>
</feature>
<feature type="binding site" evidence="9">
    <location>
        <begin position="54"/>
        <end position="61"/>
    </location>
    <ligand>
        <name>ATP</name>
        <dbReference type="ChEBI" id="CHEBI:30616"/>
    </ligand>
</feature>
<feature type="binding site" evidence="1">
    <location>
        <position position="1293"/>
    </location>
    <ligand>
        <name>Mg(2+)</name>
        <dbReference type="ChEBI" id="CHEBI:18420"/>
        <label>1</label>
    </ligand>
</feature>
<feature type="binding site" evidence="1">
    <location>
        <position position="1371"/>
    </location>
    <ligand>
        <name>Mg(2+)</name>
        <dbReference type="ChEBI" id="CHEBI:18420"/>
        <label>1</label>
    </ligand>
</feature>
<feature type="binding site" evidence="1">
    <location>
        <position position="1374"/>
    </location>
    <ligand>
        <name>Mg(2+)</name>
        <dbReference type="ChEBI" id="CHEBI:18420"/>
        <label>1</label>
    </ligand>
</feature>
<feature type="binding site" evidence="5">
    <location>
        <position position="1664"/>
    </location>
    <ligand>
        <name>Mg(2+)</name>
        <dbReference type="ChEBI" id="CHEBI:18420"/>
        <label>2</label>
    </ligand>
</feature>
<feature type="binding site" evidence="5">
    <location>
        <position position="1769"/>
    </location>
    <ligand>
        <name>Mg(2+)</name>
        <dbReference type="ChEBI" id="CHEBI:18420"/>
        <label>2</label>
    </ligand>
</feature>
<feature type="binding site" evidence="5">
    <location>
        <position position="1772"/>
    </location>
    <ligand>
        <name>Mg(2+)</name>
        <dbReference type="ChEBI" id="CHEBI:18420"/>
        <label>2</label>
    </ligand>
</feature>
<feature type="site" description="Important for activity" evidence="4">
    <location>
        <position position="1765"/>
    </location>
</feature>
<sequence>MAGLQLMTPASSPMGPFFGLPWQQEAIHDNIYTPRKYQVELLEAALDHNIIVCLNSGSGKTFIAVLLSKELSYQIRGDFSKNAKRTVFLVNSEKQVSQQVSAVRTHTDLKVGEYSDLQKTQCWAKEKWYQEFQTHQVLVMTCHIFLNVLKTGNVSLSNINLLVFDECHLAIQDHPYRDIMKICESCQTCPRILGLTASILNGKCDPHDLEEKIQNLEEILRSNAETATDLVVLDRYASQPCEIVLDCGPYVDRSGLYQRLLNELDEALNFLTDCNISTHSKERDSTIISKQILSDCWAVLLVLGPWCADKVAGMMVRELQKYIKHEQEELHRKFLLFTDTILRKIHALCEEHFSPASLDMKFVTPKVIKLLEILRKYKPYERQQFESVEWYNNRNQDNYVSWSDSEDDDDDEDEEIEEKEKTETSFPSPFTNILCGIIFVERRYTAVVLNRLIKEAGKQDPELAYISSNFITGHGIGKNQPRNKQMEVEFRKQEEVLRKFRAHETNLLIATSIVEEGVDIPKCNLVVRFDLPSEYRSYVQSKGRARAPISNYIMLADSDKIKAFEEDLKTYKAIEKILRNKCSKSMDCGNTESEPIVDDDEIFPPYVLRQDDGSPRVTINTAIGHINRYCARLPSDPFTHLAPKCRTRELPDGPYRSTLYLPINSPLRAPIVGPPMNCARLAERAVALICCKKLHEIGELDDHLMPVGKETVKYEEELDLHDEEETSVPGRPGSTKRRQCYPKAIPECLRNSYPKPGQPCYLYVIGMVLTTPLPDELNFRRRKLYPPEDTTRCFGILTAKPIPQIPHFPVYTRSGEVTISIELKKSGFSLNLEQLELITRLHRYIFSHILRLEKPALEFKPTVADCAYCVLPLNVVNDSGTLDIDFKFVEDIEKSEARTGIPNTQYSAEGPFIFKLEDYQDAVIIPRYRNFDQPHRFYVADVYTDLTPLSKFPSPEYETFAEYYKTKYNLDLTNLNQPLLDVDHTSSRLNLLTPRHLNQKGKALPLSSAEKRKAKWESLQNKQILVPELCAIHPVPASLWRKAVCLPSILYRLHCLLTAEELRAQTAIDAGVGVKSLPEDFRYPNLDFGWKRSIDGKTFISNQSFSAMERESDCRLDITTVPDSATSSAAHHVMYTQMNDQMSVNCTPPCPKSLSDLQGVCFSDDCKAINGITCNGLTNGNWEAESGVCFQKDELIACKQEIPEKSTSFHVQNLPNDNQPILNECTLSKKFLDGNVGKPISDECPSTCTSDINYESGLSSGYSSKTLGPNPGLILQALTLSNASDGFNLERLEMLGDSFLKHAITTYLFCTYPDSHEGRLSYMRSKKVSNCNLYRLGKKKGSPSRMVVSIFDPPVNWLPPGYIVNQDKNCDKWESNETSGESVMANGKIDEDFEDEEDEDLMWRNPKEETDFDDDFLEYDQEHIKFIDNMLMGSGAFVKKIQLSAFAPPDQNYEWRPPKKPPLESAPFRSEFDDFDYSSWDAMCYLDPSKAVEEDDFVVGFWNPSEENGGADAGKQSISYDLHTEQCIADKSIADCVEALLGCYLTSCGERAAQLFLCSLGLKVLPEVRKPVTNTSTRGNYSLDGRTNSELSCKGIEYGYLKIPPRCMFEHPEAEKTLDHLISGFENFEKKINYQFKNKAYLLQAFTHASYHYNTITDCYQRLEFLGDAILDYLITKHLYEDPRQHSPGVLTDLRSALVNNTIFASLAVKYDYHKYFKAISPELFHVIDDFVQFQLEKNEMQGMDSELRRSEEDEEKEEDIEVPKAMGDIFESLAGAIYMDSGMSLETVWRVYYPMMQPLIEKFSANVPRSPVRELLEMEPETAKFSPAERTYDGKVRVMVEVVGKGKFKGVGRSYRIAKSAAARRALRSLKANQSQVPNS</sequence>
<comment type="function">
    <text evidence="2 5">Double-stranded RNA (dsRNA) endoribonuclease playing a central role in short dsRNA-mediated post-transcriptional gene silencing. Cleaves naturally occurring long dsRNAs and short hairpin pre-microRNAs (miRNA) into fragments of twenty-one to twenty-three nucleotides with 3' overhang of two nucleotides, producing respectively short interfering RNAs (siRNA) and mature microRNAs. SiRNAs and miRNAs serve as guide to direct the RNA-induced silencing complex (RISC) to complementary RNAs to degrade them or prevent their translation. Gene silencing mediated by siRNAs, also called RNA interference, controls the elimination of transcripts from mobile and repetitive DNA elements of the genome but also the degradation of exogenous RNA of viral origin for instance. The miRNA pathway on the other side is a mean to specifically regulate the expression of target genes (By similarity). During embryonic development, at the left-right organizer, post-transcriptionally regulates the expression of dand5 in flow sensor cells. In post-flow stages, acts along with Bicc1 to repress dand5 mRNA translation and decay. Decreased Dand5 expression lifts repression of Nodal and defines leftness by induction of the lateral plate mesoderm Nodal signaling cascade (By similarity).</text>
</comment>
<comment type="catalytic activity">
    <reaction evidence="3">
        <text>Endonucleolytic cleavage to 5'-phosphomonoester.</text>
        <dbReference type="EC" id="3.1.26.3"/>
    </reaction>
</comment>
<comment type="cofactor">
    <cofactor evidence="5">
        <name>Mg(2+)</name>
        <dbReference type="ChEBI" id="CHEBI:18420"/>
    </cofactor>
    <cofactor evidence="5">
        <name>Mn(2+)</name>
        <dbReference type="ChEBI" id="CHEBI:29035"/>
    </cofactor>
    <text evidence="5">Binds 2 magnesium or manganese ions per subunit.</text>
</comment>
<comment type="subunit">
    <text evidence="5">Component of the RISC loading complex (RLC), or micro-RNA (miRNA) loading complex (miRLC), which is composed of dicer1, ago2 and tarbp2; dicer1 and tarbp2 are required to process precursor miRNAs (pre-miRNAs) to mature miRNAs and then load them onto ago2. Note that the trimeric RLC/miRLC is also referred to as RISC.</text>
</comment>
<comment type="subcellular location">
    <subcellularLocation>
        <location evidence="5">Cytoplasm</location>
    </subcellularLocation>
</comment>
<comment type="similarity">
    <text evidence="11">Belongs to the helicase family. Dicer subfamily.</text>
</comment>
<gene>
    <name type="primary">dicer1.S</name>
    <name type="synonym">dicer1</name>
</gene>
<protein>
    <recommendedName>
        <fullName>Endoribonuclease Dicer-S</fullName>
        <ecNumber>3.1.26.3</ecNumber>
    </recommendedName>
</protein>
<accession>A0A8J1LLF7</accession>